<name>CH071_HUMAN</name>
<reference key="1">
    <citation type="journal article" date="2001" name="Genome Res.">
        <title>Towards a catalog of human genes and proteins: sequencing and analysis of 500 novel complete protein coding human cDNAs.</title>
        <authorList>
            <person name="Wiemann S."/>
            <person name="Weil B."/>
            <person name="Wellenreuther R."/>
            <person name="Gassenhuber J."/>
            <person name="Glassl S."/>
            <person name="Ansorge W."/>
            <person name="Boecher M."/>
            <person name="Bloecker H."/>
            <person name="Bauersachs S."/>
            <person name="Blum H."/>
            <person name="Lauber J."/>
            <person name="Duesterhoeft A."/>
            <person name="Beyer A."/>
            <person name="Koehrer K."/>
            <person name="Strack N."/>
            <person name="Mewes H.-W."/>
            <person name="Ottenwaelder B."/>
            <person name="Obermaier B."/>
            <person name="Tampe J."/>
            <person name="Heubner D."/>
            <person name="Wambutt R."/>
            <person name="Korn B."/>
            <person name="Klein M."/>
            <person name="Poustka A."/>
        </authorList>
    </citation>
    <scope>NUCLEOTIDE SEQUENCE [LARGE SCALE MRNA]</scope>
    <source>
        <tissue>Testis</tissue>
    </source>
</reference>
<reference key="2">
    <citation type="journal article" date="2006" name="Nature">
        <title>DNA sequence and analysis of human chromosome 8.</title>
        <authorList>
            <person name="Nusbaum C."/>
            <person name="Mikkelsen T.S."/>
            <person name="Zody M.C."/>
            <person name="Asakawa S."/>
            <person name="Taudien S."/>
            <person name="Garber M."/>
            <person name="Kodira C.D."/>
            <person name="Schueler M.G."/>
            <person name="Shimizu A."/>
            <person name="Whittaker C.A."/>
            <person name="Chang J.L."/>
            <person name="Cuomo C.A."/>
            <person name="Dewar K."/>
            <person name="FitzGerald M.G."/>
            <person name="Yang X."/>
            <person name="Allen N.R."/>
            <person name="Anderson S."/>
            <person name="Asakawa T."/>
            <person name="Blechschmidt K."/>
            <person name="Bloom T."/>
            <person name="Borowsky M.L."/>
            <person name="Butler J."/>
            <person name="Cook A."/>
            <person name="Corum B."/>
            <person name="DeArellano K."/>
            <person name="DeCaprio D."/>
            <person name="Dooley K.T."/>
            <person name="Dorris L. III"/>
            <person name="Engels R."/>
            <person name="Gloeckner G."/>
            <person name="Hafez N."/>
            <person name="Hagopian D.S."/>
            <person name="Hall J.L."/>
            <person name="Ishikawa S.K."/>
            <person name="Jaffe D.B."/>
            <person name="Kamat A."/>
            <person name="Kudoh J."/>
            <person name="Lehmann R."/>
            <person name="Lokitsang T."/>
            <person name="Macdonald P."/>
            <person name="Major J.E."/>
            <person name="Matthews C.D."/>
            <person name="Mauceli E."/>
            <person name="Menzel U."/>
            <person name="Mihalev A.H."/>
            <person name="Minoshima S."/>
            <person name="Murayama Y."/>
            <person name="Naylor J.W."/>
            <person name="Nicol R."/>
            <person name="Nguyen C."/>
            <person name="O'Leary S.B."/>
            <person name="O'Neill K."/>
            <person name="Parker S.C.J."/>
            <person name="Polley A."/>
            <person name="Raymond C.K."/>
            <person name="Reichwald K."/>
            <person name="Rodriguez J."/>
            <person name="Sasaki T."/>
            <person name="Schilhabel M."/>
            <person name="Siddiqui R."/>
            <person name="Smith C.L."/>
            <person name="Sneddon T.P."/>
            <person name="Talamas J.A."/>
            <person name="Tenzin P."/>
            <person name="Topham K."/>
            <person name="Venkataraman V."/>
            <person name="Wen G."/>
            <person name="Yamazaki S."/>
            <person name="Young S.K."/>
            <person name="Zeng Q."/>
            <person name="Zimmer A.R."/>
            <person name="Rosenthal A."/>
            <person name="Birren B.W."/>
            <person name="Platzer M."/>
            <person name="Shimizu N."/>
            <person name="Lander E.S."/>
        </authorList>
    </citation>
    <scope>NUCLEOTIDE SEQUENCE [LARGE SCALE GENOMIC DNA]</scope>
</reference>
<comment type="interaction">
    <interactant intactId="EBI-10039207">
        <id>Q9Y4M8</id>
    </interactant>
    <interactant intactId="EBI-740322">
        <id>Q93062</id>
        <label>RBPMS</label>
    </interactant>
    <organismsDiffer>false</organismsDiffer>
    <experiments>3</experiments>
</comment>
<comment type="caution">
    <text evidence="2">Product of a dubious CDS prediction. May be produced at very low levels due to a premature stop codon in the mRNA, leading to nonsense-mediated mRNA decay.</text>
</comment>
<protein>
    <recommendedName>
        <fullName>Putative uncharacterized protein encoded by LINC00588</fullName>
    </recommendedName>
</protein>
<gene>
    <name type="primary">LINC00588</name>
    <name type="synonym">C8orf71</name>
</gene>
<accession>Q9Y4M8</accession>
<organism>
    <name type="scientific">Homo sapiens</name>
    <name type="common">Human</name>
    <dbReference type="NCBI Taxonomy" id="9606"/>
    <lineage>
        <taxon>Eukaryota</taxon>
        <taxon>Metazoa</taxon>
        <taxon>Chordata</taxon>
        <taxon>Craniata</taxon>
        <taxon>Vertebrata</taxon>
        <taxon>Euteleostomi</taxon>
        <taxon>Mammalia</taxon>
        <taxon>Eutheria</taxon>
        <taxon>Euarchontoglires</taxon>
        <taxon>Primates</taxon>
        <taxon>Haplorrhini</taxon>
        <taxon>Catarrhini</taxon>
        <taxon>Hominidae</taxon>
        <taxon>Homo</taxon>
    </lineage>
</organism>
<sequence length="146" mass="16018">MATFHRAHATSSVKPRARRHQEPNSGDWPGSYRAGTRCSAIGFRLLHSPQHWRPRSLGAGQGREDPSWEGGALGDLKALWDQPCQPPPWVQLQLSSAYGARQQRWQLSTLPEPPAARTPGQMPQQRLIRAAGPSAAGGGNQWLSPM</sequence>
<feature type="chain" id="PRO_0000271030" description="Putative uncharacterized protein encoded by LINC00588">
    <location>
        <begin position="1"/>
        <end position="146"/>
    </location>
</feature>
<feature type="region of interest" description="Disordered" evidence="1">
    <location>
        <begin position="1"/>
        <end position="33"/>
    </location>
</feature>
<feature type="region of interest" description="Disordered" evidence="1">
    <location>
        <begin position="50"/>
        <end position="70"/>
    </location>
</feature>
<keyword id="KW-1185">Reference proteome</keyword>
<proteinExistence type="uncertain"/>
<evidence type="ECO:0000256" key="1">
    <source>
        <dbReference type="SAM" id="MobiDB-lite"/>
    </source>
</evidence>
<evidence type="ECO:0000305" key="2"/>
<dbReference type="EMBL" id="AL080200">
    <property type="protein sequence ID" value="CAB45772.1"/>
    <property type="molecule type" value="mRNA"/>
</dbReference>
<dbReference type="EMBL" id="AC025674">
    <property type="status" value="NOT_ANNOTATED_CDS"/>
    <property type="molecule type" value="Genomic_DNA"/>
</dbReference>
<dbReference type="PIR" id="T12508">
    <property type="entry name" value="T12508"/>
</dbReference>
<dbReference type="FunCoup" id="Q9Y4M8">
    <property type="interactions" value="1"/>
</dbReference>
<dbReference type="IntAct" id="Q9Y4M8">
    <property type="interactions" value="2"/>
</dbReference>
<dbReference type="BioMuta" id="HGNC:24494"/>
<dbReference type="AGR" id="HGNC:24494"/>
<dbReference type="GeneCards" id="LINC00588"/>
<dbReference type="HGNC" id="HGNC:24494">
    <property type="gene designation" value="LINC00588"/>
</dbReference>
<dbReference type="neXtProt" id="NX_Q9Y4M8"/>
<dbReference type="InParanoid" id="Q9Y4M8"/>
<dbReference type="PAN-GO" id="Q9Y4M8">
    <property type="GO annotations" value="0 GO annotations based on evolutionary models"/>
</dbReference>
<dbReference type="PathwayCommons" id="Q9Y4M8"/>
<dbReference type="SignaLink" id="Q9Y4M8"/>
<dbReference type="Pharos" id="Q9Y4M8">
    <property type="development level" value="Tdark"/>
</dbReference>
<dbReference type="Proteomes" id="UP000005640">
    <property type="component" value="Unplaced"/>
</dbReference>
<dbReference type="RNAct" id="Q9Y4M8">
    <property type="molecule type" value="protein"/>
</dbReference>